<protein>
    <recommendedName>
        <fullName evidence="1">Phosphoheptose isomerase</fullName>
        <ecNumber evidence="1">5.3.1.28</ecNumber>
    </recommendedName>
    <alternativeName>
        <fullName evidence="1">Sedoheptulose 7-phosphate isomerase</fullName>
    </alternativeName>
</protein>
<name>GMHA_GEOSM</name>
<organism>
    <name type="scientific">Geobacter sp. (strain M21)</name>
    <dbReference type="NCBI Taxonomy" id="443144"/>
    <lineage>
        <taxon>Bacteria</taxon>
        <taxon>Pseudomonadati</taxon>
        <taxon>Thermodesulfobacteriota</taxon>
        <taxon>Desulfuromonadia</taxon>
        <taxon>Geobacterales</taxon>
        <taxon>Geobacteraceae</taxon>
        <taxon>Geobacter</taxon>
    </lineage>
</organism>
<keyword id="KW-0119">Carbohydrate metabolism</keyword>
<keyword id="KW-0963">Cytoplasm</keyword>
<keyword id="KW-0413">Isomerase</keyword>
<keyword id="KW-0479">Metal-binding</keyword>
<keyword id="KW-0862">Zinc</keyword>
<comment type="function">
    <text evidence="1">Catalyzes the isomerization of sedoheptulose 7-phosphate in D-glycero-D-manno-heptose 7-phosphate.</text>
</comment>
<comment type="catalytic activity">
    <reaction evidence="1">
        <text>2 D-sedoheptulose 7-phosphate = D-glycero-alpha-D-manno-heptose 7-phosphate + D-glycero-beta-D-manno-heptose 7-phosphate</text>
        <dbReference type="Rhea" id="RHEA:27489"/>
        <dbReference type="ChEBI" id="CHEBI:57483"/>
        <dbReference type="ChEBI" id="CHEBI:60203"/>
        <dbReference type="ChEBI" id="CHEBI:60204"/>
        <dbReference type="EC" id="5.3.1.28"/>
    </reaction>
</comment>
<comment type="cofactor">
    <cofactor evidence="1">
        <name>Zn(2+)</name>
        <dbReference type="ChEBI" id="CHEBI:29105"/>
    </cofactor>
    <text evidence="1">Binds 1 zinc ion per subunit.</text>
</comment>
<comment type="pathway">
    <text evidence="1">Carbohydrate biosynthesis; D-glycero-D-manno-heptose 7-phosphate biosynthesis; D-glycero-alpha-D-manno-heptose 7-phosphate and D-glycero-beta-D-manno-heptose 7-phosphate from sedoheptulose 7-phosphate: step 1/1.</text>
</comment>
<comment type="subunit">
    <text evidence="1">Homotetramer.</text>
</comment>
<comment type="subcellular location">
    <subcellularLocation>
        <location evidence="1">Cytoplasm</location>
    </subcellularLocation>
</comment>
<comment type="miscellaneous">
    <text evidence="1">The reaction produces a racemic mixture of D-glycero-alpha-D-manno-heptose 7-phosphate and D-glycero-beta-D-manno-heptose 7-phosphate.</text>
</comment>
<comment type="similarity">
    <text evidence="1">Belongs to the SIS family. GmhA subfamily.</text>
</comment>
<accession>C6E6C5</accession>
<proteinExistence type="inferred from homology"/>
<sequence>MLEEIKAQLRAHCEVMTALQGELSPAIESAVSLVVDAYRAGNKLLVMGNGGSAADAQHFVAEMVGRFKLERRALPAIALHTDTSILTAIGNDYGFDRIFSRQVEAHAAAGDVVVGISTSGNSPNVQLALELAREKGCRTVALLGKDGGSIKSVAELPLIVPSNDTPRIQEGHITIIHIICDLVERELFLKGN</sequence>
<dbReference type="EC" id="5.3.1.28" evidence="1"/>
<dbReference type="EMBL" id="CP001661">
    <property type="protein sequence ID" value="ACT17766.1"/>
    <property type="molecule type" value="Genomic_DNA"/>
</dbReference>
<dbReference type="SMR" id="C6E6C5"/>
<dbReference type="STRING" id="443144.GM21_1712"/>
<dbReference type="KEGG" id="gem:GM21_1712"/>
<dbReference type="eggNOG" id="COG0279">
    <property type="taxonomic scope" value="Bacteria"/>
</dbReference>
<dbReference type="HOGENOM" id="CLU_080999_4_0_7"/>
<dbReference type="OrthoDB" id="9810929at2"/>
<dbReference type="UniPathway" id="UPA00041">
    <property type="reaction ID" value="UER00436"/>
</dbReference>
<dbReference type="GO" id="GO:0005737">
    <property type="term" value="C:cytoplasm"/>
    <property type="evidence" value="ECO:0007669"/>
    <property type="project" value="UniProtKB-SubCell"/>
</dbReference>
<dbReference type="GO" id="GO:0097367">
    <property type="term" value="F:carbohydrate derivative binding"/>
    <property type="evidence" value="ECO:0007669"/>
    <property type="project" value="InterPro"/>
</dbReference>
<dbReference type="GO" id="GO:0008968">
    <property type="term" value="F:D-sedoheptulose 7-phosphate isomerase activity"/>
    <property type="evidence" value="ECO:0007669"/>
    <property type="project" value="UniProtKB-UniRule"/>
</dbReference>
<dbReference type="GO" id="GO:0008270">
    <property type="term" value="F:zinc ion binding"/>
    <property type="evidence" value="ECO:0007669"/>
    <property type="project" value="UniProtKB-UniRule"/>
</dbReference>
<dbReference type="GO" id="GO:0005975">
    <property type="term" value="P:carbohydrate metabolic process"/>
    <property type="evidence" value="ECO:0007669"/>
    <property type="project" value="UniProtKB-UniRule"/>
</dbReference>
<dbReference type="GO" id="GO:2001061">
    <property type="term" value="P:D-glycero-D-manno-heptose 7-phosphate biosynthetic process"/>
    <property type="evidence" value="ECO:0007669"/>
    <property type="project" value="UniProtKB-UniPathway"/>
</dbReference>
<dbReference type="CDD" id="cd05006">
    <property type="entry name" value="SIS_GmhA"/>
    <property type="match status" value="1"/>
</dbReference>
<dbReference type="Gene3D" id="3.40.50.10490">
    <property type="entry name" value="Glucose-6-phosphate isomerase like protein, domain 1"/>
    <property type="match status" value="1"/>
</dbReference>
<dbReference type="HAMAP" id="MF_00067">
    <property type="entry name" value="GmhA"/>
    <property type="match status" value="1"/>
</dbReference>
<dbReference type="InterPro" id="IPR035461">
    <property type="entry name" value="GmhA/DiaA"/>
</dbReference>
<dbReference type="InterPro" id="IPR004515">
    <property type="entry name" value="Phosphoheptose_Isoase"/>
</dbReference>
<dbReference type="InterPro" id="IPR001347">
    <property type="entry name" value="SIS_dom"/>
</dbReference>
<dbReference type="InterPro" id="IPR046348">
    <property type="entry name" value="SIS_dom_sf"/>
</dbReference>
<dbReference type="InterPro" id="IPR050099">
    <property type="entry name" value="SIS_GmhA/DiaA_subfam"/>
</dbReference>
<dbReference type="NCBIfam" id="TIGR00441">
    <property type="entry name" value="gmhA"/>
    <property type="match status" value="1"/>
</dbReference>
<dbReference type="PANTHER" id="PTHR30390:SF6">
    <property type="entry name" value="DNAA INITIATOR-ASSOCIATING PROTEIN DIAA"/>
    <property type="match status" value="1"/>
</dbReference>
<dbReference type="PANTHER" id="PTHR30390">
    <property type="entry name" value="SEDOHEPTULOSE 7-PHOSPHATE ISOMERASE / DNAA INITIATOR-ASSOCIATING FACTOR FOR REPLICATION INITIATION"/>
    <property type="match status" value="1"/>
</dbReference>
<dbReference type="Pfam" id="PF13580">
    <property type="entry name" value="SIS_2"/>
    <property type="match status" value="1"/>
</dbReference>
<dbReference type="SUPFAM" id="SSF53697">
    <property type="entry name" value="SIS domain"/>
    <property type="match status" value="1"/>
</dbReference>
<dbReference type="PROSITE" id="PS51464">
    <property type="entry name" value="SIS"/>
    <property type="match status" value="1"/>
</dbReference>
<evidence type="ECO:0000255" key="1">
    <source>
        <dbReference type="HAMAP-Rule" id="MF_00067"/>
    </source>
</evidence>
<feature type="chain" id="PRO_1000202420" description="Phosphoheptose isomerase">
    <location>
        <begin position="1"/>
        <end position="192"/>
    </location>
</feature>
<feature type="domain" description="SIS" evidence="1">
    <location>
        <begin position="34"/>
        <end position="192"/>
    </location>
</feature>
<feature type="binding site" evidence="1">
    <location>
        <begin position="49"/>
        <end position="51"/>
    </location>
    <ligand>
        <name>substrate</name>
    </ligand>
</feature>
<feature type="binding site" evidence="1">
    <location>
        <position position="58"/>
    </location>
    <ligand>
        <name>Zn(2+)</name>
        <dbReference type="ChEBI" id="CHEBI:29105"/>
    </ligand>
</feature>
<feature type="binding site" evidence="1">
    <location>
        <position position="62"/>
    </location>
    <ligand>
        <name>substrate</name>
    </ligand>
</feature>
<feature type="binding site" evidence="1">
    <location>
        <position position="62"/>
    </location>
    <ligand>
        <name>Zn(2+)</name>
        <dbReference type="ChEBI" id="CHEBI:29105"/>
    </ligand>
</feature>
<feature type="binding site" evidence="1">
    <location>
        <begin position="91"/>
        <end position="92"/>
    </location>
    <ligand>
        <name>substrate</name>
    </ligand>
</feature>
<feature type="binding site" evidence="1">
    <location>
        <begin position="117"/>
        <end position="119"/>
    </location>
    <ligand>
        <name>substrate</name>
    </ligand>
</feature>
<feature type="binding site" evidence="1">
    <location>
        <position position="122"/>
    </location>
    <ligand>
        <name>substrate</name>
    </ligand>
</feature>
<feature type="binding site" evidence="1">
    <location>
        <position position="169"/>
    </location>
    <ligand>
        <name>substrate</name>
    </ligand>
</feature>
<feature type="binding site" evidence="1">
    <location>
        <position position="169"/>
    </location>
    <ligand>
        <name>Zn(2+)</name>
        <dbReference type="ChEBI" id="CHEBI:29105"/>
    </ligand>
</feature>
<feature type="binding site" evidence="1">
    <location>
        <position position="177"/>
    </location>
    <ligand>
        <name>Zn(2+)</name>
        <dbReference type="ChEBI" id="CHEBI:29105"/>
    </ligand>
</feature>
<reference key="1">
    <citation type="submission" date="2009-07" db="EMBL/GenBank/DDBJ databases">
        <title>Complete sequence of Geobacter sp. M21.</title>
        <authorList>
            <consortium name="US DOE Joint Genome Institute"/>
            <person name="Lucas S."/>
            <person name="Copeland A."/>
            <person name="Lapidus A."/>
            <person name="Glavina del Rio T."/>
            <person name="Dalin E."/>
            <person name="Tice H."/>
            <person name="Bruce D."/>
            <person name="Goodwin L."/>
            <person name="Pitluck S."/>
            <person name="Saunders E."/>
            <person name="Brettin T."/>
            <person name="Detter J.C."/>
            <person name="Han C."/>
            <person name="Larimer F."/>
            <person name="Land M."/>
            <person name="Hauser L."/>
            <person name="Kyrpides N."/>
            <person name="Ovchinnikova G."/>
            <person name="Lovley D."/>
        </authorList>
    </citation>
    <scope>NUCLEOTIDE SEQUENCE [LARGE SCALE GENOMIC DNA]</scope>
    <source>
        <strain>M21</strain>
    </source>
</reference>
<gene>
    <name evidence="1" type="primary">gmhA</name>
    <name type="ordered locus">GM21_1712</name>
</gene>